<feature type="chain" id="PRO_1000131928" description="Leucyl/phenylalanyl-tRNA--protein transferase">
    <location>
        <begin position="1"/>
        <end position="191"/>
    </location>
</feature>
<evidence type="ECO:0000255" key="1">
    <source>
        <dbReference type="HAMAP-Rule" id="MF_00688"/>
    </source>
</evidence>
<organism>
    <name type="scientific">Herpetosiphon aurantiacus (strain ATCC 23779 / DSM 785 / 114-95)</name>
    <dbReference type="NCBI Taxonomy" id="316274"/>
    <lineage>
        <taxon>Bacteria</taxon>
        <taxon>Bacillati</taxon>
        <taxon>Chloroflexota</taxon>
        <taxon>Chloroflexia</taxon>
        <taxon>Herpetosiphonales</taxon>
        <taxon>Herpetosiphonaceae</taxon>
        <taxon>Herpetosiphon</taxon>
    </lineage>
</organism>
<accession>A9B6X1</accession>
<dbReference type="EC" id="2.3.2.6" evidence="1"/>
<dbReference type="EMBL" id="CP000875">
    <property type="protein sequence ID" value="ABX05839.1"/>
    <property type="molecule type" value="Genomic_DNA"/>
</dbReference>
<dbReference type="SMR" id="A9B6X1"/>
<dbReference type="KEGG" id="hau:Haur_3202"/>
<dbReference type="eggNOG" id="COG2360">
    <property type="taxonomic scope" value="Bacteria"/>
</dbReference>
<dbReference type="HOGENOM" id="CLU_075045_1_1_0"/>
<dbReference type="InParanoid" id="A9B6X1"/>
<dbReference type="Proteomes" id="UP000000787">
    <property type="component" value="Chromosome"/>
</dbReference>
<dbReference type="GO" id="GO:0005737">
    <property type="term" value="C:cytoplasm"/>
    <property type="evidence" value="ECO:0007669"/>
    <property type="project" value="UniProtKB-SubCell"/>
</dbReference>
<dbReference type="GO" id="GO:0008914">
    <property type="term" value="F:leucyl-tRNA--protein transferase activity"/>
    <property type="evidence" value="ECO:0007669"/>
    <property type="project" value="UniProtKB-UniRule"/>
</dbReference>
<dbReference type="GO" id="GO:0030163">
    <property type="term" value="P:protein catabolic process"/>
    <property type="evidence" value="ECO:0007669"/>
    <property type="project" value="UniProtKB-UniRule"/>
</dbReference>
<dbReference type="FunFam" id="3.40.630.70:FF:000001">
    <property type="entry name" value="Leucyl/phenylalanyl-tRNA--protein transferase"/>
    <property type="match status" value="1"/>
</dbReference>
<dbReference type="Gene3D" id="3.40.630.70">
    <property type="entry name" value="Leucyl/phenylalanyl-tRNA-protein transferase, C-terminal domain"/>
    <property type="match status" value="1"/>
</dbReference>
<dbReference type="Gene3D" id="3.30.70.3550">
    <property type="entry name" value="Leucyl/phenylalanyl-tRNA-protein transferase, N-terminal domain"/>
    <property type="match status" value="1"/>
</dbReference>
<dbReference type="HAMAP" id="MF_00688">
    <property type="entry name" value="Leu_Phe_trans"/>
    <property type="match status" value="1"/>
</dbReference>
<dbReference type="InterPro" id="IPR016181">
    <property type="entry name" value="Acyl_CoA_acyltransferase"/>
</dbReference>
<dbReference type="InterPro" id="IPR004616">
    <property type="entry name" value="Leu/Phe-tRNA_Trfase"/>
</dbReference>
<dbReference type="InterPro" id="IPR042203">
    <property type="entry name" value="Leu/Phe-tRNA_Trfase_C"/>
</dbReference>
<dbReference type="InterPro" id="IPR042221">
    <property type="entry name" value="Leu/Phe-tRNA_Trfase_N"/>
</dbReference>
<dbReference type="NCBIfam" id="TIGR00667">
    <property type="entry name" value="aat"/>
    <property type="match status" value="1"/>
</dbReference>
<dbReference type="PANTHER" id="PTHR30098">
    <property type="entry name" value="LEUCYL/PHENYLALANYL-TRNA--PROTEIN TRANSFERASE"/>
    <property type="match status" value="1"/>
</dbReference>
<dbReference type="PANTHER" id="PTHR30098:SF2">
    <property type="entry name" value="LEUCYL_PHENYLALANYL-TRNA--PROTEIN TRANSFERASE"/>
    <property type="match status" value="1"/>
</dbReference>
<dbReference type="Pfam" id="PF03588">
    <property type="entry name" value="Leu_Phe_trans"/>
    <property type="match status" value="1"/>
</dbReference>
<dbReference type="SUPFAM" id="SSF55729">
    <property type="entry name" value="Acyl-CoA N-acyltransferases (Nat)"/>
    <property type="match status" value="1"/>
</dbReference>
<name>LFTR_HERA2</name>
<keyword id="KW-0012">Acyltransferase</keyword>
<keyword id="KW-0963">Cytoplasm</keyword>
<keyword id="KW-0808">Transferase</keyword>
<sequence length="191" mass="21637">MTKRLSPQLLIYGYAQGIFPMDEDGQIYWYDPDPRAIIPLDERFHVSSSLQRTIRRQTFEIRFDTAFRETMQACSERDETWISQEFIEIYSQLHAGGLAHSVEAWQDGEMVGGLYGVGLAGLFAGESMWSKARDASKVALVALVERLRAGGFQLLDTQFITPHLATFGAYEIPRAEYKQLLVKALQCSATF</sequence>
<protein>
    <recommendedName>
        <fullName evidence="1">Leucyl/phenylalanyl-tRNA--protein transferase</fullName>
        <ecNumber evidence="1">2.3.2.6</ecNumber>
    </recommendedName>
    <alternativeName>
        <fullName evidence="1">L/F-transferase</fullName>
    </alternativeName>
    <alternativeName>
        <fullName evidence="1">Leucyltransferase</fullName>
    </alternativeName>
    <alternativeName>
        <fullName evidence="1">Phenyalanyltransferase</fullName>
    </alternativeName>
</protein>
<reference key="1">
    <citation type="journal article" date="2011" name="Stand. Genomic Sci.">
        <title>Complete genome sequence of the filamentous gliding predatory bacterium Herpetosiphon aurantiacus type strain (114-95(T)).</title>
        <authorList>
            <person name="Kiss H."/>
            <person name="Nett M."/>
            <person name="Domin N."/>
            <person name="Martin K."/>
            <person name="Maresca J.A."/>
            <person name="Copeland A."/>
            <person name="Lapidus A."/>
            <person name="Lucas S."/>
            <person name="Berry K.W."/>
            <person name="Glavina Del Rio T."/>
            <person name="Dalin E."/>
            <person name="Tice H."/>
            <person name="Pitluck S."/>
            <person name="Richardson P."/>
            <person name="Bruce D."/>
            <person name="Goodwin L."/>
            <person name="Han C."/>
            <person name="Detter J.C."/>
            <person name="Schmutz J."/>
            <person name="Brettin T."/>
            <person name="Land M."/>
            <person name="Hauser L."/>
            <person name="Kyrpides N.C."/>
            <person name="Ivanova N."/>
            <person name="Goeker M."/>
            <person name="Woyke T."/>
            <person name="Klenk H.P."/>
            <person name="Bryant D.A."/>
        </authorList>
    </citation>
    <scope>NUCLEOTIDE SEQUENCE [LARGE SCALE GENOMIC DNA]</scope>
    <source>
        <strain>ATCC 23779 / DSM 785 / 114-95</strain>
    </source>
</reference>
<gene>
    <name evidence="1" type="primary">aat</name>
    <name type="ordered locus">Haur_3202</name>
</gene>
<proteinExistence type="inferred from homology"/>
<comment type="function">
    <text evidence="1">Functions in the N-end rule pathway of protein degradation where it conjugates Leu, Phe and, less efficiently, Met from aminoacyl-tRNAs to the N-termini of proteins containing an N-terminal arginine or lysine.</text>
</comment>
<comment type="catalytic activity">
    <reaction evidence="1">
        <text>N-terminal L-lysyl-[protein] + L-leucyl-tRNA(Leu) = N-terminal L-leucyl-L-lysyl-[protein] + tRNA(Leu) + H(+)</text>
        <dbReference type="Rhea" id="RHEA:12340"/>
        <dbReference type="Rhea" id="RHEA-COMP:9613"/>
        <dbReference type="Rhea" id="RHEA-COMP:9622"/>
        <dbReference type="Rhea" id="RHEA-COMP:12670"/>
        <dbReference type="Rhea" id="RHEA-COMP:12671"/>
        <dbReference type="ChEBI" id="CHEBI:15378"/>
        <dbReference type="ChEBI" id="CHEBI:65249"/>
        <dbReference type="ChEBI" id="CHEBI:78442"/>
        <dbReference type="ChEBI" id="CHEBI:78494"/>
        <dbReference type="ChEBI" id="CHEBI:133043"/>
        <dbReference type="EC" id="2.3.2.6"/>
    </reaction>
</comment>
<comment type="catalytic activity">
    <reaction evidence="1">
        <text>N-terminal L-arginyl-[protein] + L-leucyl-tRNA(Leu) = N-terminal L-leucyl-L-arginyl-[protein] + tRNA(Leu) + H(+)</text>
        <dbReference type="Rhea" id="RHEA:50416"/>
        <dbReference type="Rhea" id="RHEA-COMP:9613"/>
        <dbReference type="Rhea" id="RHEA-COMP:9622"/>
        <dbReference type="Rhea" id="RHEA-COMP:12672"/>
        <dbReference type="Rhea" id="RHEA-COMP:12673"/>
        <dbReference type="ChEBI" id="CHEBI:15378"/>
        <dbReference type="ChEBI" id="CHEBI:64719"/>
        <dbReference type="ChEBI" id="CHEBI:78442"/>
        <dbReference type="ChEBI" id="CHEBI:78494"/>
        <dbReference type="ChEBI" id="CHEBI:133044"/>
        <dbReference type="EC" id="2.3.2.6"/>
    </reaction>
</comment>
<comment type="catalytic activity">
    <reaction evidence="1">
        <text>L-phenylalanyl-tRNA(Phe) + an N-terminal L-alpha-aminoacyl-[protein] = an N-terminal L-phenylalanyl-L-alpha-aminoacyl-[protein] + tRNA(Phe)</text>
        <dbReference type="Rhea" id="RHEA:43632"/>
        <dbReference type="Rhea" id="RHEA-COMP:9668"/>
        <dbReference type="Rhea" id="RHEA-COMP:9699"/>
        <dbReference type="Rhea" id="RHEA-COMP:10636"/>
        <dbReference type="Rhea" id="RHEA-COMP:10637"/>
        <dbReference type="ChEBI" id="CHEBI:78442"/>
        <dbReference type="ChEBI" id="CHEBI:78531"/>
        <dbReference type="ChEBI" id="CHEBI:78597"/>
        <dbReference type="ChEBI" id="CHEBI:83561"/>
        <dbReference type="EC" id="2.3.2.6"/>
    </reaction>
</comment>
<comment type="subcellular location">
    <subcellularLocation>
        <location evidence="1">Cytoplasm</location>
    </subcellularLocation>
</comment>
<comment type="similarity">
    <text evidence="1">Belongs to the L/F-transferase family.</text>
</comment>